<protein>
    <recommendedName>
        <fullName evidence="1">Adenylosuccinate synthetase</fullName>
        <shortName evidence="1">AMPSase</shortName>
        <shortName evidence="1">AdSS</shortName>
        <ecNumber evidence="1">6.3.4.4</ecNumber>
    </recommendedName>
    <alternativeName>
        <fullName evidence="1">IMP--aspartate ligase</fullName>
    </alternativeName>
</protein>
<comment type="function">
    <text evidence="1">Plays an important role in the de novo pathway of purine nucleotide biosynthesis. Catalyzes the first committed step in the biosynthesis of AMP from IMP.</text>
</comment>
<comment type="catalytic activity">
    <reaction evidence="1">
        <text>IMP + L-aspartate + GTP = N(6)-(1,2-dicarboxyethyl)-AMP + GDP + phosphate + 2 H(+)</text>
        <dbReference type="Rhea" id="RHEA:15753"/>
        <dbReference type="ChEBI" id="CHEBI:15378"/>
        <dbReference type="ChEBI" id="CHEBI:29991"/>
        <dbReference type="ChEBI" id="CHEBI:37565"/>
        <dbReference type="ChEBI" id="CHEBI:43474"/>
        <dbReference type="ChEBI" id="CHEBI:57567"/>
        <dbReference type="ChEBI" id="CHEBI:58053"/>
        <dbReference type="ChEBI" id="CHEBI:58189"/>
        <dbReference type="EC" id="6.3.4.4"/>
    </reaction>
</comment>
<comment type="cofactor">
    <cofactor evidence="1">
        <name>Mg(2+)</name>
        <dbReference type="ChEBI" id="CHEBI:18420"/>
    </cofactor>
    <text evidence="1">Binds 1 Mg(2+) ion per subunit.</text>
</comment>
<comment type="pathway">
    <text evidence="1">Purine metabolism; AMP biosynthesis via de novo pathway; AMP from IMP: step 1/2.</text>
</comment>
<comment type="subunit">
    <text evidence="1">Homodimer.</text>
</comment>
<comment type="subcellular location">
    <subcellularLocation>
        <location evidence="1">Cytoplasm</location>
    </subcellularLocation>
</comment>
<comment type="similarity">
    <text evidence="1">Belongs to the adenylosuccinate synthetase family.</text>
</comment>
<evidence type="ECO:0000255" key="1">
    <source>
        <dbReference type="HAMAP-Rule" id="MF_00011"/>
    </source>
</evidence>
<sequence>MSSVVVVGTQWGDEGKGKITDFLSENAEAIARYQGGNNAGHTIKFDGVTYKLHLIPSGIFYKEKISVIGNGMVVDPKALVEELKYLHDKGVDTSNLRISNRAHIILPYHIRIDEADEERKGANKIGTTKKGIGPAYMDKAARVGIRIIDLLDKETFKEKLEHNLGEKNRLLERFYELEGFKLEDILEEYYDYGQQFKEYVCDTSVVLNDALDDGKRVLFEGAQGVMLDIDQGTYPFVTSSNPIAGGVTIGSGVGPSKINHVVGVAKAYTTRVGDGPFPTELFDSIGDTIREVGHEYGTTTGRPRRVGWFDSVVVRHARRVSGLTDLSLTLLDVLTGIETLKICVAYKLDGKTITEFPASLKDLARCEPVYEELPGWTEDITGVTSLDDLPVNCRHYMERIAQLTGVQVSMFSVGPDRAQTHVIKSVWRLA</sequence>
<proteinExistence type="inferred from homology"/>
<feature type="chain" id="PRO_1000194763" description="Adenylosuccinate synthetase">
    <location>
        <begin position="1"/>
        <end position="430"/>
    </location>
</feature>
<feature type="active site" description="Proton acceptor" evidence="1">
    <location>
        <position position="13"/>
    </location>
</feature>
<feature type="active site" description="Proton donor" evidence="1">
    <location>
        <position position="41"/>
    </location>
</feature>
<feature type="binding site" evidence="1">
    <location>
        <begin position="12"/>
        <end position="18"/>
    </location>
    <ligand>
        <name>GTP</name>
        <dbReference type="ChEBI" id="CHEBI:37565"/>
    </ligand>
</feature>
<feature type="binding site" description="in other chain" evidence="1">
    <location>
        <begin position="13"/>
        <end position="16"/>
    </location>
    <ligand>
        <name>IMP</name>
        <dbReference type="ChEBI" id="CHEBI:58053"/>
        <note>ligand shared between dimeric partners</note>
    </ligand>
</feature>
<feature type="binding site" evidence="1">
    <location>
        <position position="13"/>
    </location>
    <ligand>
        <name>Mg(2+)</name>
        <dbReference type="ChEBI" id="CHEBI:18420"/>
    </ligand>
</feature>
<feature type="binding site" description="in other chain" evidence="1">
    <location>
        <begin position="38"/>
        <end position="41"/>
    </location>
    <ligand>
        <name>IMP</name>
        <dbReference type="ChEBI" id="CHEBI:58053"/>
        <note>ligand shared between dimeric partners</note>
    </ligand>
</feature>
<feature type="binding site" evidence="1">
    <location>
        <begin position="40"/>
        <end position="42"/>
    </location>
    <ligand>
        <name>GTP</name>
        <dbReference type="ChEBI" id="CHEBI:37565"/>
    </ligand>
</feature>
<feature type="binding site" evidence="1">
    <location>
        <position position="40"/>
    </location>
    <ligand>
        <name>Mg(2+)</name>
        <dbReference type="ChEBI" id="CHEBI:18420"/>
    </ligand>
</feature>
<feature type="binding site" description="in other chain" evidence="1">
    <location>
        <position position="128"/>
    </location>
    <ligand>
        <name>IMP</name>
        <dbReference type="ChEBI" id="CHEBI:58053"/>
        <note>ligand shared between dimeric partners</note>
    </ligand>
</feature>
<feature type="binding site" evidence="1">
    <location>
        <position position="142"/>
    </location>
    <ligand>
        <name>IMP</name>
        <dbReference type="ChEBI" id="CHEBI:58053"/>
        <note>ligand shared between dimeric partners</note>
    </ligand>
</feature>
<feature type="binding site" description="in other chain" evidence="1">
    <location>
        <position position="223"/>
    </location>
    <ligand>
        <name>IMP</name>
        <dbReference type="ChEBI" id="CHEBI:58053"/>
        <note>ligand shared between dimeric partners</note>
    </ligand>
</feature>
<feature type="binding site" description="in other chain" evidence="1">
    <location>
        <position position="238"/>
    </location>
    <ligand>
        <name>IMP</name>
        <dbReference type="ChEBI" id="CHEBI:58053"/>
        <note>ligand shared between dimeric partners</note>
    </ligand>
</feature>
<feature type="binding site" evidence="1">
    <location>
        <begin position="298"/>
        <end position="304"/>
    </location>
    <ligand>
        <name>substrate</name>
    </ligand>
</feature>
<feature type="binding site" description="in other chain" evidence="1">
    <location>
        <position position="302"/>
    </location>
    <ligand>
        <name>IMP</name>
        <dbReference type="ChEBI" id="CHEBI:58053"/>
        <note>ligand shared between dimeric partners</note>
    </ligand>
</feature>
<feature type="binding site" evidence="1">
    <location>
        <position position="304"/>
    </location>
    <ligand>
        <name>GTP</name>
        <dbReference type="ChEBI" id="CHEBI:37565"/>
    </ligand>
</feature>
<feature type="binding site" evidence="1">
    <location>
        <begin position="330"/>
        <end position="332"/>
    </location>
    <ligand>
        <name>GTP</name>
        <dbReference type="ChEBI" id="CHEBI:37565"/>
    </ligand>
</feature>
<feature type="binding site" evidence="1">
    <location>
        <begin position="412"/>
        <end position="414"/>
    </location>
    <ligand>
        <name>GTP</name>
        <dbReference type="ChEBI" id="CHEBI:37565"/>
    </ligand>
</feature>
<gene>
    <name evidence="1" type="primary">purA</name>
    <name type="ordered locus">LMHCC_2614</name>
</gene>
<organism>
    <name type="scientific">Listeria monocytogenes serotype 4a (strain HCC23)</name>
    <dbReference type="NCBI Taxonomy" id="552536"/>
    <lineage>
        <taxon>Bacteria</taxon>
        <taxon>Bacillati</taxon>
        <taxon>Bacillota</taxon>
        <taxon>Bacilli</taxon>
        <taxon>Bacillales</taxon>
        <taxon>Listeriaceae</taxon>
        <taxon>Listeria</taxon>
    </lineage>
</organism>
<dbReference type="EC" id="6.3.4.4" evidence="1"/>
<dbReference type="EMBL" id="CP001175">
    <property type="protein sequence ID" value="ACK40949.1"/>
    <property type="molecule type" value="Genomic_DNA"/>
</dbReference>
<dbReference type="RefSeq" id="WP_003728977.1">
    <property type="nucleotide sequence ID" value="NC_011660.1"/>
</dbReference>
<dbReference type="SMR" id="B8DAL0"/>
<dbReference type="KEGG" id="lmh:LMHCC_2614"/>
<dbReference type="HOGENOM" id="CLU_029848_0_0_9"/>
<dbReference type="UniPathway" id="UPA00075">
    <property type="reaction ID" value="UER00335"/>
</dbReference>
<dbReference type="GO" id="GO:0005737">
    <property type="term" value="C:cytoplasm"/>
    <property type="evidence" value="ECO:0007669"/>
    <property type="project" value="UniProtKB-SubCell"/>
</dbReference>
<dbReference type="GO" id="GO:0004019">
    <property type="term" value="F:adenylosuccinate synthase activity"/>
    <property type="evidence" value="ECO:0007669"/>
    <property type="project" value="UniProtKB-UniRule"/>
</dbReference>
<dbReference type="GO" id="GO:0005525">
    <property type="term" value="F:GTP binding"/>
    <property type="evidence" value="ECO:0007669"/>
    <property type="project" value="UniProtKB-UniRule"/>
</dbReference>
<dbReference type="GO" id="GO:0000287">
    <property type="term" value="F:magnesium ion binding"/>
    <property type="evidence" value="ECO:0007669"/>
    <property type="project" value="UniProtKB-UniRule"/>
</dbReference>
<dbReference type="GO" id="GO:0044208">
    <property type="term" value="P:'de novo' AMP biosynthetic process"/>
    <property type="evidence" value="ECO:0007669"/>
    <property type="project" value="UniProtKB-UniRule"/>
</dbReference>
<dbReference type="GO" id="GO:0046040">
    <property type="term" value="P:IMP metabolic process"/>
    <property type="evidence" value="ECO:0007669"/>
    <property type="project" value="TreeGrafter"/>
</dbReference>
<dbReference type="CDD" id="cd03108">
    <property type="entry name" value="AdSS"/>
    <property type="match status" value="1"/>
</dbReference>
<dbReference type="FunFam" id="1.10.300.10:FF:000001">
    <property type="entry name" value="Adenylosuccinate synthetase"/>
    <property type="match status" value="1"/>
</dbReference>
<dbReference type="FunFam" id="3.90.170.10:FF:000001">
    <property type="entry name" value="Adenylosuccinate synthetase"/>
    <property type="match status" value="1"/>
</dbReference>
<dbReference type="Gene3D" id="3.40.440.10">
    <property type="entry name" value="Adenylosuccinate Synthetase, subunit A, domain 1"/>
    <property type="match status" value="1"/>
</dbReference>
<dbReference type="Gene3D" id="1.10.300.10">
    <property type="entry name" value="Adenylosuccinate Synthetase, subunit A, domain 2"/>
    <property type="match status" value="1"/>
</dbReference>
<dbReference type="Gene3D" id="3.90.170.10">
    <property type="entry name" value="Adenylosuccinate Synthetase, subunit A, domain 3"/>
    <property type="match status" value="1"/>
</dbReference>
<dbReference type="HAMAP" id="MF_00011">
    <property type="entry name" value="Adenylosucc_synth"/>
    <property type="match status" value="1"/>
</dbReference>
<dbReference type="InterPro" id="IPR018220">
    <property type="entry name" value="Adenylosuccin_syn_GTP-bd"/>
</dbReference>
<dbReference type="InterPro" id="IPR033128">
    <property type="entry name" value="Adenylosuccin_syn_Lys_AS"/>
</dbReference>
<dbReference type="InterPro" id="IPR042109">
    <property type="entry name" value="Adenylosuccinate_synth_dom1"/>
</dbReference>
<dbReference type="InterPro" id="IPR042110">
    <property type="entry name" value="Adenylosuccinate_synth_dom2"/>
</dbReference>
<dbReference type="InterPro" id="IPR042111">
    <property type="entry name" value="Adenylosuccinate_synth_dom3"/>
</dbReference>
<dbReference type="InterPro" id="IPR001114">
    <property type="entry name" value="Adenylosuccinate_synthetase"/>
</dbReference>
<dbReference type="InterPro" id="IPR027417">
    <property type="entry name" value="P-loop_NTPase"/>
</dbReference>
<dbReference type="NCBIfam" id="NF002223">
    <property type="entry name" value="PRK01117.1"/>
    <property type="match status" value="1"/>
</dbReference>
<dbReference type="NCBIfam" id="TIGR00184">
    <property type="entry name" value="purA"/>
    <property type="match status" value="1"/>
</dbReference>
<dbReference type="PANTHER" id="PTHR11846">
    <property type="entry name" value="ADENYLOSUCCINATE SYNTHETASE"/>
    <property type="match status" value="1"/>
</dbReference>
<dbReference type="PANTHER" id="PTHR11846:SF0">
    <property type="entry name" value="ADENYLOSUCCINATE SYNTHETASE"/>
    <property type="match status" value="1"/>
</dbReference>
<dbReference type="Pfam" id="PF00709">
    <property type="entry name" value="Adenylsucc_synt"/>
    <property type="match status" value="1"/>
</dbReference>
<dbReference type="SMART" id="SM00788">
    <property type="entry name" value="Adenylsucc_synt"/>
    <property type="match status" value="1"/>
</dbReference>
<dbReference type="SUPFAM" id="SSF52540">
    <property type="entry name" value="P-loop containing nucleoside triphosphate hydrolases"/>
    <property type="match status" value="1"/>
</dbReference>
<dbReference type="PROSITE" id="PS01266">
    <property type="entry name" value="ADENYLOSUCCIN_SYN_1"/>
    <property type="match status" value="1"/>
</dbReference>
<dbReference type="PROSITE" id="PS00513">
    <property type="entry name" value="ADENYLOSUCCIN_SYN_2"/>
    <property type="match status" value="1"/>
</dbReference>
<accession>B8DAL0</accession>
<name>PURA_LISMH</name>
<keyword id="KW-0963">Cytoplasm</keyword>
<keyword id="KW-0342">GTP-binding</keyword>
<keyword id="KW-0436">Ligase</keyword>
<keyword id="KW-0460">Magnesium</keyword>
<keyword id="KW-0479">Metal-binding</keyword>
<keyword id="KW-0547">Nucleotide-binding</keyword>
<keyword id="KW-0658">Purine biosynthesis</keyword>
<reference key="1">
    <citation type="journal article" date="2011" name="J. Bacteriol.">
        <title>Genome sequence of lineage III Listeria monocytogenes strain HCC23.</title>
        <authorList>
            <person name="Steele C.L."/>
            <person name="Donaldson J.R."/>
            <person name="Paul D."/>
            <person name="Banes M.M."/>
            <person name="Arick T."/>
            <person name="Bridges S.M."/>
            <person name="Lawrence M.L."/>
        </authorList>
    </citation>
    <scope>NUCLEOTIDE SEQUENCE [LARGE SCALE GENOMIC DNA]</scope>
    <source>
        <strain>HCC23</strain>
    </source>
</reference>